<feature type="chain" id="PRO_1000081981" description="Aspartate--ammonia ligase">
    <location>
        <begin position="1"/>
        <end position="330"/>
    </location>
</feature>
<evidence type="ECO:0000255" key="1">
    <source>
        <dbReference type="HAMAP-Rule" id="MF_00555"/>
    </source>
</evidence>
<sequence length="330" mass="36651">MKTAYIAKQRQISFVKSHFSRQLEERLGLIEVQAPILSRVGDGTQDNLSGCEKAVQVKVKALPDAQFEVVHSLAKWKRQTLGQHDFSAGEGLYTHMKALRPDEDRLSPLHSVYVDQWDWERVMGDGERQFSTLKSTVEAIWAGIKATEAAVSEEFGLAPFLPDQIHFVHSQELLSRYPDLDAKGRERAIAKDLGAVFLVGIGGKLSDGHRHDVRAPDYDDWSTPSELGHAGLNGDILVWNPVLEDAFELSSMGIRVDADTLKHQLALTGDEDRLELEWHQALLRGEMPQTIGGGIGQSRLTMLLLQLPHIGQVQCGVWPAAVRESVPSLL</sequence>
<accession>B1IWZ4</accession>
<organism>
    <name type="scientific">Escherichia coli (strain ATCC 8739 / DSM 1576 / NBRC 3972 / NCIMB 8545 / WDCM 00012 / Crooks)</name>
    <dbReference type="NCBI Taxonomy" id="481805"/>
    <lineage>
        <taxon>Bacteria</taxon>
        <taxon>Pseudomonadati</taxon>
        <taxon>Pseudomonadota</taxon>
        <taxon>Gammaproteobacteria</taxon>
        <taxon>Enterobacterales</taxon>
        <taxon>Enterobacteriaceae</taxon>
        <taxon>Escherichia</taxon>
    </lineage>
</organism>
<proteinExistence type="inferred from homology"/>
<protein>
    <recommendedName>
        <fullName evidence="1">Aspartate--ammonia ligase</fullName>
        <ecNumber evidence="1">6.3.1.1</ecNumber>
    </recommendedName>
    <alternativeName>
        <fullName evidence="1">Asparagine synthetase A</fullName>
    </alternativeName>
</protein>
<reference key="1">
    <citation type="submission" date="2008-02" db="EMBL/GenBank/DDBJ databases">
        <title>Complete sequence of Escherichia coli C str. ATCC 8739.</title>
        <authorList>
            <person name="Copeland A."/>
            <person name="Lucas S."/>
            <person name="Lapidus A."/>
            <person name="Glavina del Rio T."/>
            <person name="Dalin E."/>
            <person name="Tice H."/>
            <person name="Bruce D."/>
            <person name="Goodwin L."/>
            <person name="Pitluck S."/>
            <person name="Kiss H."/>
            <person name="Brettin T."/>
            <person name="Detter J.C."/>
            <person name="Han C."/>
            <person name="Kuske C.R."/>
            <person name="Schmutz J."/>
            <person name="Larimer F."/>
            <person name="Land M."/>
            <person name="Hauser L."/>
            <person name="Kyrpides N."/>
            <person name="Mikhailova N."/>
            <person name="Ingram L."/>
            <person name="Richardson P."/>
        </authorList>
    </citation>
    <scope>NUCLEOTIDE SEQUENCE [LARGE SCALE GENOMIC DNA]</scope>
    <source>
        <strain>ATCC 8739 / DSM 1576 / NBRC 3972 / NCIMB 8545 / WDCM 00012 / Crooks</strain>
    </source>
</reference>
<comment type="catalytic activity">
    <reaction evidence="1">
        <text>L-aspartate + NH4(+) + ATP = L-asparagine + AMP + diphosphate + H(+)</text>
        <dbReference type="Rhea" id="RHEA:11372"/>
        <dbReference type="ChEBI" id="CHEBI:15378"/>
        <dbReference type="ChEBI" id="CHEBI:28938"/>
        <dbReference type="ChEBI" id="CHEBI:29991"/>
        <dbReference type="ChEBI" id="CHEBI:30616"/>
        <dbReference type="ChEBI" id="CHEBI:33019"/>
        <dbReference type="ChEBI" id="CHEBI:58048"/>
        <dbReference type="ChEBI" id="CHEBI:456215"/>
        <dbReference type="EC" id="6.3.1.1"/>
    </reaction>
</comment>
<comment type="pathway">
    <text evidence="1">Amino-acid biosynthesis; L-asparagine biosynthesis; L-asparagine from L-aspartate (ammonia route): step 1/1.</text>
</comment>
<comment type="subcellular location">
    <subcellularLocation>
        <location evidence="1">Cytoplasm</location>
    </subcellularLocation>
</comment>
<comment type="similarity">
    <text evidence="1">Belongs to the class-II aminoacyl-tRNA synthetase family. AsnA subfamily.</text>
</comment>
<dbReference type="EC" id="6.3.1.1" evidence="1"/>
<dbReference type="EMBL" id="CP000946">
    <property type="protein sequence ID" value="ACA79846.1"/>
    <property type="molecule type" value="Genomic_DNA"/>
</dbReference>
<dbReference type="RefSeq" id="WP_000845104.1">
    <property type="nucleotide sequence ID" value="NZ_MTFT01000013.1"/>
</dbReference>
<dbReference type="SMR" id="B1IWZ4"/>
<dbReference type="KEGG" id="ecl:EcolC_4250"/>
<dbReference type="HOGENOM" id="CLU_071543_0_0_6"/>
<dbReference type="UniPathway" id="UPA00134">
    <property type="reaction ID" value="UER00194"/>
</dbReference>
<dbReference type="GO" id="GO:0005829">
    <property type="term" value="C:cytosol"/>
    <property type="evidence" value="ECO:0007669"/>
    <property type="project" value="TreeGrafter"/>
</dbReference>
<dbReference type="GO" id="GO:0004071">
    <property type="term" value="F:aspartate-ammonia ligase activity"/>
    <property type="evidence" value="ECO:0007669"/>
    <property type="project" value="UniProtKB-UniRule"/>
</dbReference>
<dbReference type="GO" id="GO:0005524">
    <property type="term" value="F:ATP binding"/>
    <property type="evidence" value="ECO:0007669"/>
    <property type="project" value="UniProtKB-UniRule"/>
</dbReference>
<dbReference type="GO" id="GO:0070981">
    <property type="term" value="P:L-asparagine biosynthetic process"/>
    <property type="evidence" value="ECO:0007669"/>
    <property type="project" value="UniProtKB-UniRule"/>
</dbReference>
<dbReference type="CDD" id="cd00645">
    <property type="entry name" value="AsnA"/>
    <property type="match status" value="1"/>
</dbReference>
<dbReference type="FunFam" id="3.30.930.10:FF:000025">
    <property type="entry name" value="Aspartate--ammonia ligase"/>
    <property type="match status" value="1"/>
</dbReference>
<dbReference type="Gene3D" id="3.30.930.10">
    <property type="entry name" value="Bira Bifunctional Protein, Domain 2"/>
    <property type="match status" value="1"/>
</dbReference>
<dbReference type="HAMAP" id="MF_00555">
    <property type="entry name" value="AsnA"/>
    <property type="match status" value="1"/>
</dbReference>
<dbReference type="InterPro" id="IPR006195">
    <property type="entry name" value="aa-tRNA-synth_II"/>
</dbReference>
<dbReference type="InterPro" id="IPR045864">
    <property type="entry name" value="aa-tRNA-synth_II/BPL/LPL"/>
</dbReference>
<dbReference type="InterPro" id="IPR004618">
    <property type="entry name" value="AsnA"/>
</dbReference>
<dbReference type="NCBIfam" id="TIGR00669">
    <property type="entry name" value="asnA"/>
    <property type="match status" value="1"/>
</dbReference>
<dbReference type="PANTHER" id="PTHR30073">
    <property type="entry name" value="ASPARTATE--AMMONIA LIGASE"/>
    <property type="match status" value="1"/>
</dbReference>
<dbReference type="PANTHER" id="PTHR30073:SF5">
    <property type="entry name" value="ASPARTATE--AMMONIA LIGASE"/>
    <property type="match status" value="1"/>
</dbReference>
<dbReference type="Pfam" id="PF03590">
    <property type="entry name" value="AsnA"/>
    <property type="match status" value="1"/>
</dbReference>
<dbReference type="PIRSF" id="PIRSF001555">
    <property type="entry name" value="Asp_ammon_ligase"/>
    <property type="match status" value="1"/>
</dbReference>
<dbReference type="SUPFAM" id="SSF55681">
    <property type="entry name" value="Class II aaRS and biotin synthetases"/>
    <property type="match status" value="1"/>
</dbReference>
<dbReference type="PROSITE" id="PS50862">
    <property type="entry name" value="AA_TRNA_LIGASE_II"/>
    <property type="match status" value="1"/>
</dbReference>
<keyword id="KW-0028">Amino-acid biosynthesis</keyword>
<keyword id="KW-0061">Asparagine biosynthesis</keyword>
<keyword id="KW-0067">ATP-binding</keyword>
<keyword id="KW-0963">Cytoplasm</keyword>
<keyword id="KW-0436">Ligase</keyword>
<keyword id="KW-0547">Nucleotide-binding</keyword>
<gene>
    <name evidence="1" type="primary">asnA</name>
    <name type="ordered locus">EcolC_4250</name>
</gene>
<name>ASNA_ECOLC</name>